<name>GATA_LACDB</name>
<feature type="chain" id="PRO_1000015846" description="Glutamyl-tRNA(Gln) amidotransferase subunit A">
    <location>
        <begin position="1"/>
        <end position="480"/>
    </location>
</feature>
<feature type="active site" description="Charge relay system" evidence="1">
    <location>
        <position position="70"/>
    </location>
</feature>
<feature type="active site" description="Charge relay system" evidence="1">
    <location>
        <position position="145"/>
    </location>
</feature>
<feature type="active site" description="Acyl-ester intermediate" evidence="1">
    <location>
        <position position="169"/>
    </location>
</feature>
<sequence length="480" mass="51909">MNYLNETIDSLNDKLKSGAVSADQLAKDTIANIKKTDEKINAFITVDEDAKPAEDLDFNNKLAGVPIAIKDNIITNGLKTTAASHILYNFEPVYESTVVAKLKAAQATIIGKTNMDEFAMGSSTETSYFGDTKNPWNLNKVPGGSSGGSAAAVASGEVVAALGSDTGGSIRQPASFNGIFGIKPTYGRVSRWGLIAFASSLDQIGVMSKRVKDSAEVLNVIAGADDRDATVSEKEVPDYTSFLDKDVKGLRVAVPKEYMSDAVEEGVRKAVEAQIELLRANGAIINEVSLPHTKYVVPTYYIIASSEASANLERYDGIRYGYRAEAKNLDEVFLKSRSEGFGDEVKRRIMLGSFALSAGAYDKFFLQAAKVRTLICQDFDKIFEDNDVIVGPVSTETAFDLNSEISDQIKMYNNDILTISANMAGIPAASVPAGLSETTGMPVGFQIMAKRFDEGHVFQVADFIERSNKFYEQTPAGLED</sequence>
<protein>
    <recommendedName>
        <fullName evidence="1">Glutamyl-tRNA(Gln) amidotransferase subunit A</fullName>
        <shortName evidence="1">Glu-ADT subunit A</shortName>
        <ecNumber evidence="1">6.3.5.7</ecNumber>
    </recommendedName>
</protein>
<evidence type="ECO:0000255" key="1">
    <source>
        <dbReference type="HAMAP-Rule" id="MF_00120"/>
    </source>
</evidence>
<proteinExistence type="inferred from homology"/>
<dbReference type="EC" id="6.3.5.7" evidence="1"/>
<dbReference type="EMBL" id="CP000412">
    <property type="protein sequence ID" value="ABJ58065.1"/>
    <property type="molecule type" value="Genomic_DNA"/>
</dbReference>
<dbReference type="RefSeq" id="WP_003620940.1">
    <property type="nucleotide sequence ID" value="NC_008529.1"/>
</dbReference>
<dbReference type="SMR" id="Q04BV7"/>
<dbReference type="KEGG" id="lbu:LBUL_0417"/>
<dbReference type="HOGENOM" id="CLU_009600_0_3_9"/>
<dbReference type="BioCyc" id="LDEL321956:LBUL_RS01960-MONOMER"/>
<dbReference type="GO" id="GO:0030956">
    <property type="term" value="C:glutamyl-tRNA(Gln) amidotransferase complex"/>
    <property type="evidence" value="ECO:0007669"/>
    <property type="project" value="InterPro"/>
</dbReference>
<dbReference type="GO" id="GO:0005524">
    <property type="term" value="F:ATP binding"/>
    <property type="evidence" value="ECO:0007669"/>
    <property type="project" value="UniProtKB-KW"/>
</dbReference>
<dbReference type="GO" id="GO:0050567">
    <property type="term" value="F:glutaminyl-tRNA synthase (glutamine-hydrolyzing) activity"/>
    <property type="evidence" value="ECO:0007669"/>
    <property type="project" value="UniProtKB-UniRule"/>
</dbReference>
<dbReference type="GO" id="GO:0006412">
    <property type="term" value="P:translation"/>
    <property type="evidence" value="ECO:0007669"/>
    <property type="project" value="UniProtKB-UniRule"/>
</dbReference>
<dbReference type="Gene3D" id="3.90.1300.10">
    <property type="entry name" value="Amidase signature (AS) domain"/>
    <property type="match status" value="1"/>
</dbReference>
<dbReference type="HAMAP" id="MF_00120">
    <property type="entry name" value="GatA"/>
    <property type="match status" value="1"/>
</dbReference>
<dbReference type="InterPro" id="IPR000120">
    <property type="entry name" value="Amidase"/>
</dbReference>
<dbReference type="InterPro" id="IPR020556">
    <property type="entry name" value="Amidase_CS"/>
</dbReference>
<dbReference type="InterPro" id="IPR023631">
    <property type="entry name" value="Amidase_dom"/>
</dbReference>
<dbReference type="InterPro" id="IPR036928">
    <property type="entry name" value="AS_sf"/>
</dbReference>
<dbReference type="InterPro" id="IPR004412">
    <property type="entry name" value="GatA"/>
</dbReference>
<dbReference type="NCBIfam" id="TIGR00132">
    <property type="entry name" value="gatA"/>
    <property type="match status" value="1"/>
</dbReference>
<dbReference type="PANTHER" id="PTHR11895:SF151">
    <property type="entry name" value="GLUTAMYL-TRNA(GLN) AMIDOTRANSFERASE SUBUNIT A"/>
    <property type="match status" value="1"/>
</dbReference>
<dbReference type="PANTHER" id="PTHR11895">
    <property type="entry name" value="TRANSAMIDASE"/>
    <property type="match status" value="1"/>
</dbReference>
<dbReference type="Pfam" id="PF01425">
    <property type="entry name" value="Amidase"/>
    <property type="match status" value="1"/>
</dbReference>
<dbReference type="SUPFAM" id="SSF75304">
    <property type="entry name" value="Amidase signature (AS) enzymes"/>
    <property type="match status" value="1"/>
</dbReference>
<dbReference type="PROSITE" id="PS00571">
    <property type="entry name" value="AMIDASES"/>
    <property type="match status" value="1"/>
</dbReference>
<accession>Q04BV7</accession>
<reference key="1">
    <citation type="journal article" date="2006" name="Proc. Natl. Acad. Sci. U.S.A.">
        <title>Comparative genomics of the lactic acid bacteria.</title>
        <authorList>
            <person name="Makarova K.S."/>
            <person name="Slesarev A."/>
            <person name="Wolf Y.I."/>
            <person name="Sorokin A."/>
            <person name="Mirkin B."/>
            <person name="Koonin E.V."/>
            <person name="Pavlov A."/>
            <person name="Pavlova N."/>
            <person name="Karamychev V."/>
            <person name="Polouchine N."/>
            <person name="Shakhova V."/>
            <person name="Grigoriev I."/>
            <person name="Lou Y."/>
            <person name="Rohksar D."/>
            <person name="Lucas S."/>
            <person name="Huang K."/>
            <person name="Goodstein D.M."/>
            <person name="Hawkins T."/>
            <person name="Plengvidhya V."/>
            <person name="Welker D."/>
            <person name="Hughes J."/>
            <person name="Goh Y."/>
            <person name="Benson A."/>
            <person name="Baldwin K."/>
            <person name="Lee J.-H."/>
            <person name="Diaz-Muniz I."/>
            <person name="Dosti B."/>
            <person name="Smeianov V."/>
            <person name="Wechter W."/>
            <person name="Barabote R."/>
            <person name="Lorca G."/>
            <person name="Altermann E."/>
            <person name="Barrangou R."/>
            <person name="Ganesan B."/>
            <person name="Xie Y."/>
            <person name="Rawsthorne H."/>
            <person name="Tamir D."/>
            <person name="Parker C."/>
            <person name="Breidt F."/>
            <person name="Broadbent J.R."/>
            <person name="Hutkins R."/>
            <person name="O'Sullivan D."/>
            <person name="Steele J."/>
            <person name="Unlu G."/>
            <person name="Saier M.H. Jr."/>
            <person name="Klaenhammer T."/>
            <person name="Richardson P."/>
            <person name="Kozyavkin S."/>
            <person name="Weimer B.C."/>
            <person name="Mills D.A."/>
        </authorList>
    </citation>
    <scope>NUCLEOTIDE SEQUENCE [LARGE SCALE GENOMIC DNA]</scope>
    <source>
        <strain>ATCC BAA-365 / Lb-18</strain>
    </source>
</reference>
<keyword id="KW-0067">ATP-binding</keyword>
<keyword id="KW-0436">Ligase</keyword>
<keyword id="KW-0547">Nucleotide-binding</keyword>
<keyword id="KW-0648">Protein biosynthesis</keyword>
<comment type="function">
    <text evidence="1">Allows the formation of correctly charged Gln-tRNA(Gln) through the transamidation of misacylated Glu-tRNA(Gln) in organisms which lack glutaminyl-tRNA synthetase. The reaction takes place in the presence of glutamine and ATP through an activated gamma-phospho-Glu-tRNA(Gln).</text>
</comment>
<comment type="catalytic activity">
    <reaction evidence="1">
        <text>L-glutamyl-tRNA(Gln) + L-glutamine + ATP + H2O = L-glutaminyl-tRNA(Gln) + L-glutamate + ADP + phosphate + H(+)</text>
        <dbReference type="Rhea" id="RHEA:17521"/>
        <dbReference type="Rhea" id="RHEA-COMP:9681"/>
        <dbReference type="Rhea" id="RHEA-COMP:9684"/>
        <dbReference type="ChEBI" id="CHEBI:15377"/>
        <dbReference type="ChEBI" id="CHEBI:15378"/>
        <dbReference type="ChEBI" id="CHEBI:29985"/>
        <dbReference type="ChEBI" id="CHEBI:30616"/>
        <dbReference type="ChEBI" id="CHEBI:43474"/>
        <dbReference type="ChEBI" id="CHEBI:58359"/>
        <dbReference type="ChEBI" id="CHEBI:78520"/>
        <dbReference type="ChEBI" id="CHEBI:78521"/>
        <dbReference type="ChEBI" id="CHEBI:456216"/>
        <dbReference type="EC" id="6.3.5.7"/>
    </reaction>
</comment>
<comment type="subunit">
    <text evidence="1">Heterotrimer of A, B and C subunits.</text>
</comment>
<comment type="similarity">
    <text evidence="1">Belongs to the amidase family. GatA subfamily.</text>
</comment>
<organism>
    <name type="scientific">Lactobacillus delbrueckii subsp. bulgaricus (strain ATCC BAA-365 / Lb-18)</name>
    <dbReference type="NCBI Taxonomy" id="321956"/>
    <lineage>
        <taxon>Bacteria</taxon>
        <taxon>Bacillati</taxon>
        <taxon>Bacillota</taxon>
        <taxon>Bacilli</taxon>
        <taxon>Lactobacillales</taxon>
        <taxon>Lactobacillaceae</taxon>
        <taxon>Lactobacillus</taxon>
    </lineage>
</organism>
<gene>
    <name evidence="1" type="primary">gatA</name>
    <name type="ordered locus">LBUL_0417</name>
</gene>